<feature type="signal peptide" evidence="3">
    <location>
        <begin position="1"/>
        <end position="21"/>
    </location>
</feature>
<feature type="chain" id="PRO_0000316164" description="Long neurotoxin 1">
    <location>
        <begin position="22"/>
        <end position="92"/>
    </location>
</feature>
<feature type="disulfide bond" evidence="1">
    <location>
        <begin position="24"/>
        <end position="41"/>
    </location>
</feature>
<feature type="disulfide bond" evidence="1">
    <location>
        <begin position="34"/>
        <end position="62"/>
    </location>
</feature>
<feature type="disulfide bond" evidence="1">
    <location>
        <begin position="47"/>
        <end position="51"/>
    </location>
</feature>
<feature type="disulfide bond" evidence="1">
    <location>
        <begin position="66"/>
        <end position="77"/>
    </location>
</feature>
<feature type="disulfide bond" evidence="1">
    <location>
        <begin position="78"/>
        <end position="83"/>
    </location>
</feature>
<sequence>MKILLLTLVVVTIVCLDLAYTRTCFRTPYKPETCPPGQNLCYKKSWCDAFCSSRGKVIELGCTAKCPTVKDGKDITCCATDNCNTVANWKSR</sequence>
<evidence type="ECO:0000250" key="1"/>
<evidence type="ECO:0000250" key="2">
    <source>
        <dbReference type="UniProtKB" id="P60615"/>
    </source>
</evidence>
<evidence type="ECO:0000255" key="3"/>
<evidence type="ECO:0000305" key="4"/>
<accession>Q8UW29</accession>
<keyword id="KW-0008">Acetylcholine receptor inhibiting toxin</keyword>
<keyword id="KW-1015">Disulfide bond</keyword>
<keyword id="KW-0872">Ion channel impairing toxin</keyword>
<keyword id="KW-0528">Neurotoxin</keyword>
<keyword id="KW-0629">Postsynaptic neurotoxin</keyword>
<keyword id="KW-0964">Secreted</keyword>
<keyword id="KW-0732">Signal</keyword>
<keyword id="KW-0800">Toxin</keyword>
<name>3L21_HYDHA</name>
<organism>
    <name type="scientific">Hydrophis hardwickii</name>
    <name type="common">Hardwick's spine-bellied seasnake</name>
    <name type="synonym">Lapemis hardwickii</name>
    <dbReference type="NCBI Taxonomy" id="8781"/>
    <lineage>
        <taxon>Eukaryota</taxon>
        <taxon>Metazoa</taxon>
        <taxon>Chordata</taxon>
        <taxon>Craniata</taxon>
        <taxon>Vertebrata</taxon>
        <taxon>Euteleostomi</taxon>
        <taxon>Lepidosauria</taxon>
        <taxon>Squamata</taxon>
        <taxon>Bifurcata</taxon>
        <taxon>Unidentata</taxon>
        <taxon>Episquamata</taxon>
        <taxon>Toxicofera</taxon>
        <taxon>Serpentes</taxon>
        <taxon>Colubroidea</taxon>
        <taxon>Elapidae</taxon>
        <taxon>Hydrophiinae</taxon>
        <taxon>Hydrophis</taxon>
    </lineage>
</organism>
<proteinExistence type="inferred from homology"/>
<protein>
    <recommendedName>
        <fullName>Long neurotoxin 1</fullName>
    </recommendedName>
</protein>
<comment type="function">
    <text evidence="2">Binds with high affinity to muscular (alpha-1/CHRNA1) and neuronal (alpha-7/CHRNA7) nicotinic acetylcholine receptor (nAChR) and inhibits acetylcholine from binding to the receptor, thereby impairing neuromuscular and neuronal transmission.</text>
</comment>
<comment type="subcellular location">
    <subcellularLocation>
        <location evidence="1">Secreted</location>
    </subcellularLocation>
</comment>
<comment type="tissue specificity">
    <text evidence="4">Expressed by the venom gland.</text>
</comment>
<comment type="similarity">
    <text evidence="4">Belongs to the three-finger toxin family. Long-chain subfamily. Type II alpha-neurotoxin sub-subfamily.</text>
</comment>
<reference key="1">
    <citation type="submission" date="1999-06" db="EMBL/GenBank/DDBJ databases">
        <title>A novel long neurotoxin isoform.</title>
        <authorList>
            <person name="Wei J.W."/>
            <person name="Zhao G."/>
            <person name="Zhong X.F."/>
            <person name="Yang W."/>
            <person name="Xu A.L."/>
        </authorList>
    </citation>
    <scope>NUCLEOTIDE SEQUENCE [MRNA]</scope>
    <source>
        <tissue>Venom gland</tissue>
    </source>
</reference>
<dbReference type="EMBL" id="AF159537">
    <property type="protein sequence ID" value="AAL54892.1"/>
    <property type="molecule type" value="mRNA"/>
</dbReference>
<dbReference type="SMR" id="Q8UW29"/>
<dbReference type="GO" id="GO:0005576">
    <property type="term" value="C:extracellular region"/>
    <property type="evidence" value="ECO:0007669"/>
    <property type="project" value="UniProtKB-SubCell"/>
</dbReference>
<dbReference type="GO" id="GO:0030550">
    <property type="term" value="F:acetylcholine receptor inhibitor activity"/>
    <property type="evidence" value="ECO:0007669"/>
    <property type="project" value="UniProtKB-KW"/>
</dbReference>
<dbReference type="GO" id="GO:0099106">
    <property type="term" value="F:ion channel regulator activity"/>
    <property type="evidence" value="ECO:0007669"/>
    <property type="project" value="UniProtKB-KW"/>
</dbReference>
<dbReference type="GO" id="GO:0090729">
    <property type="term" value="F:toxin activity"/>
    <property type="evidence" value="ECO:0007669"/>
    <property type="project" value="UniProtKB-KW"/>
</dbReference>
<dbReference type="CDD" id="cd00206">
    <property type="entry name" value="TFP_snake_toxin"/>
    <property type="match status" value="1"/>
</dbReference>
<dbReference type="Gene3D" id="2.10.60.10">
    <property type="entry name" value="CD59"/>
    <property type="match status" value="1"/>
</dbReference>
<dbReference type="InterPro" id="IPR003571">
    <property type="entry name" value="Snake_3FTx"/>
</dbReference>
<dbReference type="InterPro" id="IPR045860">
    <property type="entry name" value="Snake_toxin-like_sf"/>
</dbReference>
<dbReference type="InterPro" id="IPR018354">
    <property type="entry name" value="Snake_toxin_con_site"/>
</dbReference>
<dbReference type="InterPro" id="IPR054131">
    <property type="entry name" value="Toxin_cobra-type"/>
</dbReference>
<dbReference type="Pfam" id="PF21947">
    <property type="entry name" value="Toxin_cobra-type"/>
    <property type="match status" value="1"/>
</dbReference>
<dbReference type="SUPFAM" id="SSF57302">
    <property type="entry name" value="Snake toxin-like"/>
    <property type="match status" value="1"/>
</dbReference>
<dbReference type="PROSITE" id="PS00272">
    <property type="entry name" value="SNAKE_TOXIN"/>
    <property type="match status" value="1"/>
</dbReference>